<evidence type="ECO:0000250" key="1">
    <source>
        <dbReference type="UniProtKB" id="P0DTL5"/>
    </source>
</evidence>
<evidence type="ECO:0000255" key="2"/>
<evidence type="ECO:0000305" key="3"/>
<sequence>MVSKPRNEWSTALSHLVLAGVSLHAAVSSVQSSRGAAAGFLLQTLAAVIMLAPELNTHEDCLAGAWVATVIGLPLLAFDFHWVNGDRSSANLLLGGGMVLAVAGDHLGPEGCSVAGQAVLLVVAVTILIVAVFTANTYGMWGGAMLGVAGLLSRLEEDRLLLLPKEDVCRWALAAGSWAYCRALHTQRLQWE</sequence>
<comment type="subcellular location">
    <subcellularLocation>
        <location evidence="2">Membrane</location>
        <topology evidence="2">Multi-pass membrane protein</topology>
    </subcellularLocation>
</comment>
<name>TM276_RAT</name>
<organism>
    <name type="scientific">Rattus norvegicus</name>
    <name type="common">Rat</name>
    <dbReference type="NCBI Taxonomy" id="10116"/>
    <lineage>
        <taxon>Eukaryota</taxon>
        <taxon>Metazoa</taxon>
        <taxon>Chordata</taxon>
        <taxon>Craniata</taxon>
        <taxon>Vertebrata</taxon>
        <taxon>Euteleostomi</taxon>
        <taxon>Mammalia</taxon>
        <taxon>Eutheria</taxon>
        <taxon>Euarchontoglires</taxon>
        <taxon>Glires</taxon>
        <taxon>Rodentia</taxon>
        <taxon>Myomorpha</taxon>
        <taxon>Muroidea</taxon>
        <taxon>Muridae</taxon>
        <taxon>Murinae</taxon>
        <taxon>Rattus</taxon>
    </lineage>
</organism>
<protein>
    <recommendedName>
        <fullName evidence="1">Transmembrane protein 276</fullName>
    </recommendedName>
</protein>
<feature type="signal peptide" evidence="2">
    <location>
        <begin position="1"/>
        <end position="32"/>
    </location>
</feature>
<feature type="chain" id="PRO_0000456485" description="Transmembrane protein 276" evidence="2">
    <location>
        <begin position="33"/>
        <end position="192"/>
    </location>
</feature>
<feature type="transmembrane region" description="Helical" evidence="2">
    <location>
        <begin position="35"/>
        <end position="55"/>
    </location>
</feature>
<feature type="transmembrane region" description="Helical" evidence="2">
    <location>
        <begin position="63"/>
        <end position="83"/>
    </location>
</feature>
<feature type="transmembrane region" description="Helical" evidence="2">
    <location>
        <begin position="92"/>
        <end position="112"/>
    </location>
</feature>
<feature type="transmembrane region" description="Helical" evidence="2">
    <location>
        <begin position="114"/>
        <end position="134"/>
    </location>
</feature>
<feature type="sequence conflict" description="In Ref. 1; AAH91178." evidence="3" ref="1">
    <original>C</original>
    <variation>G</variation>
    <location>
        <position position="61"/>
    </location>
</feature>
<gene>
    <name evidence="1" type="primary">Tmem276</name>
</gene>
<reference key="1">
    <citation type="journal article" date="2004" name="Nature">
        <title>Genome sequence of the Brown Norway rat yields insights into mammalian evolution.</title>
        <authorList>
            <person name="Gibbs R.A."/>
            <person name="Weinstock G.M."/>
            <person name="Metzker M.L."/>
            <person name="Muzny D.M."/>
            <person name="Sodergren E.J."/>
            <person name="Scherer S."/>
            <person name="Scott G."/>
            <person name="Steffen D."/>
            <person name="Worley K.C."/>
            <person name="Burch P.E."/>
            <person name="Okwuonu G."/>
            <person name="Hines S."/>
            <person name="Lewis L."/>
            <person name="Deramo C."/>
            <person name="Delgado O."/>
            <person name="Dugan-Rocha S."/>
            <person name="Miner G."/>
            <person name="Morgan M."/>
            <person name="Hawes A."/>
            <person name="Gill R."/>
            <person name="Holt R.A."/>
            <person name="Adams M.D."/>
            <person name="Amanatides P.G."/>
            <person name="Baden-Tillson H."/>
            <person name="Barnstead M."/>
            <person name="Chin S."/>
            <person name="Evans C.A."/>
            <person name="Ferriera S."/>
            <person name="Fosler C."/>
            <person name="Glodek A."/>
            <person name="Gu Z."/>
            <person name="Jennings D."/>
            <person name="Kraft C.L."/>
            <person name="Nguyen T."/>
            <person name="Pfannkoch C.M."/>
            <person name="Sitter C."/>
            <person name="Sutton G.G."/>
            <person name="Venter J.C."/>
            <person name="Woodage T."/>
            <person name="Smith D."/>
            <person name="Lee H.-M."/>
            <person name="Gustafson E."/>
            <person name="Cahill P."/>
            <person name="Kana A."/>
            <person name="Doucette-Stamm L."/>
            <person name="Weinstock K."/>
            <person name="Fechtel K."/>
            <person name="Weiss R.B."/>
            <person name="Dunn D.M."/>
            <person name="Green E.D."/>
            <person name="Blakesley R.W."/>
            <person name="Bouffard G.G."/>
            <person name="De Jong P.J."/>
            <person name="Osoegawa K."/>
            <person name="Zhu B."/>
            <person name="Marra M."/>
            <person name="Schein J."/>
            <person name="Bosdet I."/>
            <person name="Fjell C."/>
            <person name="Jones S."/>
            <person name="Krzywinski M."/>
            <person name="Mathewson C."/>
            <person name="Siddiqui A."/>
            <person name="Wye N."/>
            <person name="McPherson J."/>
            <person name="Zhao S."/>
            <person name="Fraser C.M."/>
            <person name="Shetty J."/>
            <person name="Shatsman S."/>
            <person name="Geer K."/>
            <person name="Chen Y."/>
            <person name="Abramzon S."/>
            <person name="Nierman W.C."/>
            <person name="Havlak P.H."/>
            <person name="Chen R."/>
            <person name="Durbin K.J."/>
            <person name="Egan A."/>
            <person name="Ren Y."/>
            <person name="Song X.-Z."/>
            <person name="Li B."/>
            <person name="Liu Y."/>
            <person name="Qin X."/>
            <person name="Cawley S."/>
            <person name="Cooney A.J."/>
            <person name="D'Souza L.M."/>
            <person name="Martin K."/>
            <person name="Wu J.Q."/>
            <person name="Gonzalez-Garay M.L."/>
            <person name="Jackson A.R."/>
            <person name="Kalafus K.J."/>
            <person name="McLeod M.P."/>
            <person name="Milosavljevic A."/>
            <person name="Virk D."/>
            <person name="Volkov A."/>
            <person name="Wheeler D.A."/>
            <person name="Zhang Z."/>
            <person name="Bailey J.A."/>
            <person name="Eichler E.E."/>
            <person name="Tuzun E."/>
            <person name="Birney E."/>
            <person name="Mongin E."/>
            <person name="Ureta-Vidal A."/>
            <person name="Woodwark C."/>
            <person name="Zdobnov E."/>
            <person name="Bork P."/>
            <person name="Suyama M."/>
            <person name="Torrents D."/>
            <person name="Alexandersson M."/>
            <person name="Trask B.J."/>
            <person name="Young J.M."/>
            <person name="Huang H."/>
            <person name="Wang H."/>
            <person name="Xing H."/>
            <person name="Daniels S."/>
            <person name="Gietzen D."/>
            <person name="Schmidt J."/>
            <person name="Stevens K."/>
            <person name="Vitt U."/>
            <person name="Wingrove J."/>
            <person name="Camara F."/>
            <person name="Mar Alba M."/>
            <person name="Abril J.F."/>
            <person name="Guigo R."/>
            <person name="Smit A."/>
            <person name="Dubchak I."/>
            <person name="Rubin E.M."/>
            <person name="Couronne O."/>
            <person name="Poliakov A."/>
            <person name="Huebner N."/>
            <person name="Ganten D."/>
            <person name="Goesele C."/>
            <person name="Hummel O."/>
            <person name="Kreitler T."/>
            <person name="Lee Y.-A."/>
            <person name="Monti J."/>
            <person name="Schulz H."/>
            <person name="Zimdahl H."/>
            <person name="Himmelbauer H."/>
            <person name="Lehrach H."/>
            <person name="Jacob H.J."/>
            <person name="Bromberg S."/>
            <person name="Gullings-Handley J."/>
            <person name="Jensen-Seaman M.I."/>
            <person name="Kwitek A.E."/>
            <person name="Lazar J."/>
            <person name="Pasko D."/>
            <person name="Tonellato P.J."/>
            <person name="Twigger S."/>
            <person name="Ponting C.P."/>
            <person name="Duarte J.M."/>
            <person name="Rice S."/>
            <person name="Goodstadt L."/>
            <person name="Beatson S.A."/>
            <person name="Emes R.D."/>
            <person name="Winter E.E."/>
            <person name="Webber C."/>
            <person name="Brandt P."/>
            <person name="Nyakatura G."/>
            <person name="Adetobi M."/>
            <person name="Chiaromonte F."/>
            <person name="Elnitski L."/>
            <person name="Eswara P."/>
            <person name="Hardison R.C."/>
            <person name="Hou M."/>
            <person name="Kolbe D."/>
            <person name="Makova K."/>
            <person name="Miller W."/>
            <person name="Nekrutenko A."/>
            <person name="Riemer C."/>
            <person name="Schwartz S."/>
            <person name="Taylor J."/>
            <person name="Yang S."/>
            <person name="Zhang Y."/>
            <person name="Lindpaintner K."/>
            <person name="Andrews T.D."/>
            <person name="Caccamo M."/>
            <person name="Clamp M."/>
            <person name="Clarke L."/>
            <person name="Curwen V."/>
            <person name="Durbin R.M."/>
            <person name="Eyras E."/>
            <person name="Searle S.M."/>
            <person name="Cooper G.M."/>
            <person name="Batzoglou S."/>
            <person name="Brudno M."/>
            <person name="Sidow A."/>
            <person name="Stone E.A."/>
            <person name="Payseur B.A."/>
            <person name="Bourque G."/>
            <person name="Lopez-Otin C."/>
            <person name="Puente X.S."/>
            <person name="Chakrabarti K."/>
            <person name="Chatterji S."/>
            <person name="Dewey C."/>
            <person name="Pachter L."/>
            <person name="Bray N."/>
            <person name="Yap V.B."/>
            <person name="Caspi A."/>
            <person name="Tesler G."/>
            <person name="Pevzner P.A."/>
            <person name="Haussler D."/>
            <person name="Roskin K.M."/>
            <person name="Baertsch R."/>
            <person name="Clawson H."/>
            <person name="Furey T.S."/>
            <person name="Hinrichs A.S."/>
            <person name="Karolchik D."/>
            <person name="Kent W.J."/>
            <person name="Rosenbloom K.R."/>
            <person name="Trumbower H."/>
            <person name="Weirauch M."/>
            <person name="Cooper D.N."/>
            <person name="Stenson P.D."/>
            <person name="Ma B."/>
            <person name="Brent M."/>
            <person name="Arumugam M."/>
            <person name="Shteynberg D."/>
            <person name="Copley R.R."/>
            <person name="Taylor M.S."/>
            <person name="Riethman H."/>
            <person name="Mudunuri U."/>
            <person name="Peterson J."/>
            <person name="Guyer M."/>
            <person name="Felsenfeld A."/>
            <person name="Old S."/>
            <person name="Mockrin S."/>
            <person name="Collins F.S."/>
        </authorList>
    </citation>
    <scope>NUCLEOTIDE SEQUENCE [LARGE SCALE GENOMIC DNA]</scope>
    <source>
        <strain>Brown Norway</strain>
    </source>
</reference>
<reference key="2">
    <citation type="journal article" date="2004" name="Genome Res.">
        <title>The status, quality, and expansion of the NIH full-length cDNA project: the Mammalian Gene Collection (MGC).</title>
        <authorList>
            <consortium name="The MGC Project Team"/>
        </authorList>
    </citation>
    <scope>NUCLEOTIDE SEQUENCE [LARGE SCALE MRNA]</scope>
    <source>
        <tissue>Liver</tissue>
    </source>
</reference>
<proteinExistence type="evidence at transcript level"/>
<dbReference type="EMBL" id="AC119473">
    <property type="status" value="NOT_ANNOTATED_CDS"/>
    <property type="molecule type" value="Genomic_DNA"/>
</dbReference>
<dbReference type="EMBL" id="BC091178">
    <property type="protein sequence ID" value="AAH91178.1"/>
    <property type="molecule type" value="mRNA"/>
</dbReference>
<dbReference type="RefSeq" id="NP_001020293.2">
    <property type="nucleotide sequence ID" value="NM_001025122.4"/>
</dbReference>
<dbReference type="RefSeq" id="NP_001395047.1">
    <property type="nucleotide sequence ID" value="NM_001408118.1"/>
</dbReference>
<dbReference type="RefSeq" id="XP_017450053.1">
    <property type="nucleotide sequence ID" value="XM_017594564.1"/>
</dbReference>
<dbReference type="RefSeq" id="XP_017450054.1">
    <property type="nucleotide sequence ID" value="XM_017594565.1"/>
</dbReference>
<dbReference type="PhosphoSitePlus" id="P0DW88"/>
<dbReference type="Ensembl" id="ENSRNOT00000019876.7">
    <property type="protein sequence ID" value="ENSRNOP00000019876.3"/>
    <property type="gene ID" value="ENSRNOG00000014811.10"/>
</dbReference>
<dbReference type="GeneID" id="100362155"/>
<dbReference type="KEGG" id="rno:100362155"/>
<dbReference type="AGR" id="RGD:2318728"/>
<dbReference type="CTD" id="84773"/>
<dbReference type="RGD" id="2318728">
    <property type="gene designation" value="Tmem276"/>
</dbReference>
<dbReference type="GeneTree" id="ENSGT00390000018258"/>
<dbReference type="HOGENOM" id="CLU_121989_0_0_1"/>
<dbReference type="OrthoDB" id="85524at9989"/>
<dbReference type="PRO" id="PR:P0DW88"/>
<dbReference type="Proteomes" id="UP000002494">
    <property type="component" value="Chromosome 7"/>
</dbReference>
<dbReference type="Bgee" id="ENSRNOG00000014811">
    <property type="expression patterns" value="Expressed in skeletal muscle tissue and 20 other cell types or tissues"/>
</dbReference>
<dbReference type="GO" id="GO:0016020">
    <property type="term" value="C:membrane"/>
    <property type="evidence" value="ECO:0007669"/>
    <property type="project" value="UniProtKB-SubCell"/>
</dbReference>
<dbReference type="GO" id="GO:0005634">
    <property type="term" value="C:nucleus"/>
    <property type="evidence" value="ECO:0000318"/>
    <property type="project" value="GO_Central"/>
</dbReference>
<accession>P0DW88</accession>
<accession>F1M4N0</accession>
<accession>Q5BK76</accession>
<keyword id="KW-0472">Membrane</keyword>
<keyword id="KW-1185">Reference proteome</keyword>
<keyword id="KW-0732">Signal</keyword>
<keyword id="KW-0812">Transmembrane</keyword>
<keyword id="KW-1133">Transmembrane helix</keyword>